<gene>
    <name evidence="1" type="primary">hslO</name>
    <name type="ordered locus">PMN2A_0097</name>
</gene>
<dbReference type="EMBL" id="CP000095">
    <property type="protein sequence ID" value="AAZ57589.1"/>
    <property type="molecule type" value="Genomic_DNA"/>
</dbReference>
<dbReference type="RefSeq" id="WP_011293631.1">
    <property type="nucleotide sequence ID" value="NC_007335.2"/>
</dbReference>
<dbReference type="SMR" id="Q46LN9"/>
<dbReference type="STRING" id="59920.PMN2A_0097"/>
<dbReference type="KEGG" id="pmn:PMN2A_0097"/>
<dbReference type="HOGENOM" id="CLU_054493_1_0_3"/>
<dbReference type="OrthoDB" id="9776534at2"/>
<dbReference type="PhylomeDB" id="Q46LN9"/>
<dbReference type="Proteomes" id="UP000002535">
    <property type="component" value="Chromosome"/>
</dbReference>
<dbReference type="GO" id="GO:0005737">
    <property type="term" value="C:cytoplasm"/>
    <property type="evidence" value="ECO:0007669"/>
    <property type="project" value="UniProtKB-SubCell"/>
</dbReference>
<dbReference type="GO" id="GO:0044183">
    <property type="term" value="F:protein folding chaperone"/>
    <property type="evidence" value="ECO:0007669"/>
    <property type="project" value="TreeGrafter"/>
</dbReference>
<dbReference type="GO" id="GO:0051082">
    <property type="term" value="F:unfolded protein binding"/>
    <property type="evidence" value="ECO:0007669"/>
    <property type="project" value="UniProtKB-UniRule"/>
</dbReference>
<dbReference type="GO" id="GO:0042026">
    <property type="term" value="P:protein refolding"/>
    <property type="evidence" value="ECO:0007669"/>
    <property type="project" value="TreeGrafter"/>
</dbReference>
<dbReference type="CDD" id="cd00498">
    <property type="entry name" value="Hsp33"/>
    <property type="match status" value="1"/>
</dbReference>
<dbReference type="Gene3D" id="3.55.30.10">
    <property type="entry name" value="Hsp33 domain"/>
    <property type="match status" value="1"/>
</dbReference>
<dbReference type="Gene3D" id="3.90.1280.10">
    <property type="entry name" value="HSP33 redox switch-like"/>
    <property type="match status" value="1"/>
</dbReference>
<dbReference type="HAMAP" id="MF_00117">
    <property type="entry name" value="HslO"/>
    <property type="match status" value="1"/>
</dbReference>
<dbReference type="InterPro" id="IPR000397">
    <property type="entry name" value="Heat_shock_Hsp33"/>
</dbReference>
<dbReference type="InterPro" id="IPR016154">
    <property type="entry name" value="Heat_shock_Hsp33_C"/>
</dbReference>
<dbReference type="InterPro" id="IPR016153">
    <property type="entry name" value="Heat_shock_Hsp33_N"/>
</dbReference>
<dbReference type="NCBIfam" id="NF001033">
    <property type="entry name" value="PRK00114.1"/>
    <property type="match status" value="1"/>
</dbReference>
<dbReference type="PANTHER" id="PTHR30111">
    <property type="entry name" value="33 KDA CHAPERONIN"/>
    <property type="match status" value="1"/>
</dbReference>
<dbReference type="PANTHER" id="PTHR30111:SF1">
    <property type="entry name" value="33 KDA CHAPERONIN"/>
    <property type="match status" value="1"/>
</dbReference>
<dbReference type="Pfam" id="PF01430">
    <property type="entry name" value="HSP33"/>
    <property type="match status" value="1"/>
</dbReference>
<dbReference type="PIRSF" id="PIRSF005261">
    <property type="entry name" value="Heat_shock_Hsp33"/>
    <property type="match status" value="1"/>
</dbReference>
<dbReference type="SUPFAM" id="SSF64397">
    <property type="entry name" value="Hsp33 domain"/>
    <property type="match status" value="1"/>
</dbReference>
<dbReference type="SUPFAM" id="SSF118352">
    <property type="entry name" value="HSP33 redox switch-like"/>
    <property type="match status" value="1"/>
</dbReference>
<feature type="chain" id="PRO_0000238081" description="33 kDa chaperonin">
    <location>
        <begin position="1"/>
        <end position="299"/>
    </location>
</feature>
<feature type="disulfide bond" description="Redox-active" evidence="1">
    <location>
        <begin position="247"/>
        <end position="249"/>
    </location>
</feature>
<feature type="disulfide bond" description="Redox-active" evidence="1">
    <location>
        <begin position="280"/>
        <end position="283"/>
    </location>
</feature>
<proteinExistence type="inferred from homology"/>
<sequence>MTDSLVRATAAKGGIRLVAVSTTESTKEAKERHSLSYLTSAIVGRAMSASLLLASSMKVNHGRVTLRISSNGPLKGLTIDAGRDGSVRGYVGDPSLELDLIKNKSNHYTFDFKKATGIGYLHVIRDDGKGEPHNSTVELINGGIGEDIASYLLHSEQTPSAVFVGEKINQDGIVCSGGLLAQILPKAERDYSLIDLLEDRCKEINSFSELLNKKGNNLISLIEEIFPDLDQSPSDIISTSQEVHFKCRCSRERSLSALKILGKDELQKMIKEDGKAELTCQFCKNVYLVKEDELISLID</sequence>
<accession>Q46LN9</accession>
<name>HSLO_PROMT</name>
<protein>
    <recommendedName>
        <fullName evidence="1">33 kDa chaperonin</fullName>
    </recommendedName>
    <alternativeName>
        <fullName evidence="1">Heat shock protein 33 homolog</fullName>
        <shortName evidence="1">HSP33</shortName>
    </alternativeName>
</protein>
<evidence type="ECO:0000255" key="1">
    <source>
        <dbReference type="HAMAP-Rule" id="MF_00117"/>
    </source>
</evidence>
<organism>
    <name type="scientific">Prochlorococcus marinus (strain NATL2A)</name>
    <dbReference type="NCBI Taxonomy" id="59920"/>
    <lineage>
        <taxon>Bacteria</taxon>
        <taxon>Bacillati</taxon>
        <taxon>Cyanobacteriota</taxon>
        <taxon>Cyanophyceae</taxon>
        <taxon>Synechococcales</taxon>
        <taxon>Prochlorococcaceae</taxon>
        <taxon>Prochlorococcus</taxon>
    </lineage>
</organism>
<comment type="function">
    <text evidence="1">Redox regulated molecular chaperone. Protects both thermally unfolding and oxidatively damaged proteins from irreversible aggregation. Plays an important role in the bacterial defense system toward oxidative stress.</text>
</comment>
<comment type="subcellular location">
    <subcellularLocation>
        <location evidence="1">Cytoplasm</location>
    </subcellularLocation>
</comment>
<comment type="PTM">
    <text evidence="1">Under oxidizing conditions two disulfide bonds are formed involving the reactive cysteines. Under reducing conditions zinc is bound to the reactive cysteines and the protein is inactive.</text>
</comment>
<comment type="similarity">
    <text evidence="1">Belongs to the HSP33 family.</text>
</comment>
<keyword id="KW-0143">Chaperone</keyword>
<keyword id="KW-0963">Cytoplasm</keyword>
<keyword id="KW-1015">Disulfide bond</keyword>
<keyword id="KW-0676">Redox-active center</keyword>
<keyword id="KW-1185">Reference proteome</keyword>
<keyword id="KW-0862">Zinc</keyword>
<reference key="1">
    <citation type="journal article" date="2007" name="PLoS Genet.">
        <title>Patterns and implications of gene gain and loss in the evolution of Prochlorococcus.</title>
        <authorList>
            <person name="Kettler G.C."/>
            <person name="Martiny A.C."/>
            <person name="Huang K."/>
            <person name="Zucker J."/>
            <person name="Coleman M.L."/>
            <person name="Rodrigue S."/>
            <person name="Chen F."/>
            <person name="Lapidus A."/>
            <person name="Ferriera S."/>
            <person name="Johnson J."/>
            <person name="Steglich C."/>
            <person name="Church G.M."/>
            <person name="Richardson P."/>
            <person name="Chisholm S.W."/>
        </authorList>
    </citation>
    <scope>NUCLEOTIDE SEQUENCE [LARGE SCALE GENOMIC DNA]</scope>
    <source>
        <strain>NATL2A</strain>
    </source>
</reference>